<comment type="function">
    <text evidence="1">Cleaves the N-terminal amino acid of tripeptides.</text>
</comment>
<comment type="catalytic activity">
    <reaction evidence="1">
        <text>Release of the N-terminal residue from a tripeptide.</text>
        <dbReference type="EC" id="3.4.11.4"/>
    </reaction>
</comment>
<comment type="cofactor">
    <cofactor evidence="1">
        <name>Zn(2+)</name>
        <dbReference type="ChEBI" id="CHEBI:29105"/>
    </cofactor>
    <text evidence="1">Binds 2 Zn(2+) ions per subunit.</text>
</comment>
<comment type="subcellular location">
    <subcellularLocation>
        <location evidence="1">Cytoplasm</location>
    </subcellularLocation>
</comment>
<comment type="similarity">
    <text evidence="1">Belongs to the peptidase M20B family.</text>
</comment>
<evidence type="ECO:0000255" key="1">
    <source>
        <dbReference type="HAMAP-Rule" id="MF_00550"/>
    </source>
</evidence>
<reference key="1">
    <citation type="journal article" date="2001" name="Science">
        <title>Comparative genomics of Listeria species.</title>
        <authorList>
            <person name="Glaser P."/>
            <person name="Frangeul L."/>
            <person name="Buchrieser C."/>
            <person name="Rusniok C."/>
            <person name="Amend A."/>
            <person name="Baquero F."/>
            <person name="Berche P."/>
            <person name="Bloecker H."/>
            <person name="Brandt P."/>
            <person name="Chakraborty T."/>
            <person name="Charbit A."/>
            <person name="Chetouani F."/>
            <person name="Couve E."/>
            <person name="de Daruvar A."/>
            <person name="Dehoux P."/>
            <person name="Domann E."/>
            <person name="Dominguez-Bernal G."/>
            <person name="Duchaud E."/>
            <person name="Durant L."/>
            <person name="Dussurget O."/>
            <person name="Entian K.-D."/>
            <person name="Fsihi H."/>
            <person name="Garcia-del Portillo F."/>
            <person name="Garrido P."/>
            <person name="Gautier L."/>
            <person name="Goebel W."/>
            <person name="Gomez-Lopez N."/>
            <person name="Hain T."/>
            <person name="Hauf J."/>
            <person name="Jackson D."/>
            <person name="Jones L.-M."/>
            <person name="Kaerst U."/>
            <person name="Kreft J."/>
            <person name="Kuhn M."/>
            <person name="Kunst F."/>
            <person name="Kurapkat G."/>
            <person name="Madueno E."/>
            <person name="Maitournam A."/>
            <person name="Mata Vicente J."/>
            <person name="Ng E."/>
            <person name="Nedjari H."/>
            <person name="Nordsiek G."/>
            <person name="Novella S."/>
            <person name="de Pablos B."/>
            <person name="Perez-Diaz J.-C."/>
            <person name="Purcell R."/>
            <person name="Remmel B."/>
            <person name="Rose M."/>
            <person name="Schlueter T."/>
            <person name="Simoes N."/>
            <person name="Tierrez A."/>
            <person name="Vazquez-Boland J.-A."/>
            <person name="Voss H."/>
            <person name="Wehland J."/>
            <person name="Cossart P."/>
        </authorList>
    </citation>
    <scope>NUCLEOTIDE SEQUENCE [LARGE SCALE GENOMIC DNA]</scope>
    <source>
        <strain>ATCC BAA-680 / CLIP 11262</strain>
    </source>
</reference>
<gene>
    <name evidence="1" type="primary">pepT</name>
    <name type="ordered locus">lin1892</name>
</gene>
<keyword id="KW-0031">Aminopeptidase</keyword>
<keyword id="KW-0963">Cytoplasm</keyword>
<keyword id="KW-0378">Hydrolase</keyword>
<keyword id="KW-0479">Metal-binding</keyword>
<keyword id="KW-0482">Metalloprotease</keyword>
<keyword id="KW-0645">Protease</keyword>
<keyword id="KW-0862">Zinc</keyword>
<dbReference type="EC" id="3.4.11.4" evidence="1"/>
<dbReference type="EMBL" id="AL596170">
    <property type="protein sequence ID" value="CAC97122.1"/>
    <property type="molecule type" value="Genomic_DNA"/>
</dbReference>
<dbReference type="PIR" id="AB1669">
    <property type="entry name" value="AB1669"/>
</dbReference>
<dbReference type="RefSeq" id="WP_010991009.1">
    <property type="nucleotide sequence ID" value="NC_003212.1"/>
</dbReference>
<dbReference type="SMR" id="Q92AM8"/>
<dbReference type="STRING" id="272626.gene:17566250"/>
<dbReference type="MEROPS" id="M20.003"/>
<dbReference type="GeneID" id="93235230"/>
<dbReference type="KEGG" id="lin:lin1892"/>
<dbReference type="eggNOG" id="COG2195">
    <property type="taxonomic scope" value="Bacteria"/>
</dbReference>
<dbReference type="HOGENOM" id="CLU_053676_0_0_9"/>
<dbReference type="OrthoDB" id="9804934at2"/>
<dbReference type="Proteomes" id="UP000002513">
    <property type="component" value="Chromosome"/>
</dbReference>
<dbReference type="GO" id="GO:0005829">
    <property type="term" value="C:cytosol"/>
    <property type="evidence" value="ECO:0007669"/>
    <property type="project" value="TreeGrafter"/>
</dbReference>
<dbReference type="GO" id="GO:0008237">
    <property type="term" value="F:metallopeptidase activity"/>
    <property type="evidence" value="ECO:0007669"/>
    <property type="project" value="UniProtKB-KW"/>
</dbReference>
<dbReference type="GO" id="GO:0045148">
    <property type="term" value="F:tripeptide aminopeptidase activity"/>
    <property type="evidence" value="ECO:0007669"/>
    <property type="project" value="UniProtKB-UniRule"/>
</dbReference>
<dbReference type="GO" id="GO:0008270">
    <property type="term" value="F:zinc ion binding"/>
    <property type="evidence" value="ECO:0007669"/>
    <property type="project" value="UniProtKB-UniRule"/>
</dbReference>
<dbReference type="GO" id="GO:0043171">
    <property type="term" value="P:peptide catabolic process"/>
    <property type="evidence" value="ECO:0007669"/>
    <property type="project" value="UniProtKB-UniRule"/>
</dbReference>
<dbReference type="GO" id="GO:0006508">
    <property type="term" value="P:proteolysis"/>
    <property type="evidence" value="ECO:0007669"/>
    <property type="project" value="UniProtKB-UniRule"/>
</dbReference>
<dbReference type="CDD" id="cd03892">
    <property type="entry name" value="M20_peptT"/>
    <property type="match status" value="1"/>
</dbReference>
<dbReference type="FunFam" id="3.30.70.360:FF:000002">
    <property type="entry name" value="Peptidase T"/>
    <property type="match status" value="1"/>
</dbReference>
<dbReference type="Gene3D" id="3.30.70.360">
    <property type="match status" value="1"/>
</dbReference>
<dbReference type="Gene3D" id="3.40.630.10">
    <property type="entry name" value="Zn peptidases"/>
    <property type="match status" value="1"/>
</dbReference>
<dbReference type="HAMAP" id="MF_00550">
    <property type="entry name" value="Aminopeptidase_M20"/>
    <property type="match status" value="1"/>
</dbReference>
<dbReference type="InterPro" id="IPR001261">
    <property type="entry name" value="ArgE/DapE_CS"/>
</dbReference>
<dbReference type="InterPro" id="IPR036264">
    <property type="entry name" value="Bact_exopeptidase_dim_dom"/>
</dbReference>
<dbReference type="InterPro" id="IPR002933">
    <property type="entry name" value="Peptidase_M20"/>
</dbReference>
<dbReference type="InterPro" id="IPR011650">
    <property type="entry name" value="Peptidase_M20_dimer"/>
</dbReference>
<dbReference type="InterPro" id="IPR010161">
    <property type="entry name" value="Peptidase_M20B"/>
</dbReference>
<dbReference type="NCBIfam" id="TIGR01882">
    <property type="entry name" value="peptidase-T"/>
    <property type="match status" value="1"/>
</dbReference>
<dbReference type="NCBIfam" id="NF003976">
    <property type="entry name" value="PRK05469.1"/>
    <property type="match status" value="1"/>
</dbReference>
<dbReference type="NCBIfam" id="NF009920">
    <property type="entry name" value="PRK13381.1"/>
    <property type="match status" value="1"/>
</dbReference>
<dbReference type="PANTHER" id="PTHR42994">
    <property type="entry name" value="PEPTIDASE T"/>
    <property type="match status" value="1"/>
</dbReference>
<dbReference type="PANTHER" id="PTHR42994:SF1">
    <property type="entry name" value="PEPTIDASE T"/>
    <property type="match status" value="1"/>
</dbReference>
<dbReference type="Pfam" id="PF07687">
    <property type="entry name" value="M20_dimer"/>
    <property type="match status" value="1"/>
</dbReference>
<dbReference type="Pfam" id="PF01546">
    <property type="entry name" value="Peptidase_M20"/>
    <property type="match status" value="1"/>
</dbReference>
<dbReference type="PIRSF" id="PIRSF037215">
    <property type="entry name" value="Peptidase_M20B"/>
    <property type="match status" value="1"/>
</dbReference>
<dbReference type="SUPFAM" id="SSF55031">
    <property type="entry name" value="Bacterial exopeptidase dimerisation domain"/>
    <property type="match status" value="1"/>
</dbReference>
<dbReference type="SUPFAM" id="SSF53187">
    <property type="entry name" value="Zn-dependent exopeptidases"/>
    <property type="match status" value="1"/>
</dbReference>
<dbReference type="PROSITE" id="PS00758">
    <property type="entry name" value="ARGE_DAPE_CPG2_1"/>
    <property type="match status" value="1"/>
</dbReference>
<dbReference type="PROSITE" id="PS00759">
    <property type="entry name" value="ARGE_DAPE_CPG2_2"/>
    <property type="match status" value="1"/>
</dbReference>
<protein>
    <recommendedName>
        <fullName evidence="1">Peptidase T</fullName>
        <ecNumber evidence="1">3.4.11.4</ecNumber>
    </recommendedName>
    <alternativeName>
        <fullName evidence="1">Aminotripeptidase</fullName>
        <shortName evidence="1">Tripeptidase</shortName>
    </alternativeName>
    <alternativeName>
        <fullName evidence="1">Tripeptide aminopeptidase</fullName>
    </alternativeName>
</protein>
<organism>
    <name type="scientific">Listeria innocua serovar 6a (strain ATCC BAA-680 / CLIP 11262)</name>
    <dbReference type="NCBI Taxonomy" id="272626"/>
    <lineage>
        <taxon>Bacteria</taxon>
        <taxon>Bacillati</taxon>
        <taxon>Bacillota</taxon>
        <taxon>Bacilli</taxon>
        <taxon>Bacillales</taxon>
        <taxon>Listeriaceae</taxon>
        <taxon>Listeria</taxon>
    </lineage>
</organism>
<name>PEPT_LISIN</name>
<sequence>MKEELLKRFTKYVKVDTQSNEESTVCPTTPGQMELANILVTELKEIGMQEVTVDEFGYVMATLPSNTTKEVPVIGFLAHLDTATDLTGKNVNPQVHENYDGKDIVLNKDLNVVLSPKQFPELANYKGKTLITTDGTTLLGADDKAGITEIMVAMNYLINHPEIKHGKIRVAFTPDEEIGRGPERFDVEAFGAKYAYTMDGGPLGELEYESFNAAGAKLTFNGNSVHPGTAKNKMINAVKMAMEFDAEIPKEEAPEYTDGYEGFYHLISLNGDVEQAKSYYIIRDFDHLKFVERKTHIASIAEKLAEKYGEGSVELKLNDQYYNMREKIEPVKEIVDIVSAAMRNLDIEPKISPIRGGTDGAQLSYKGLPTPNIFGGGENFHGKFEYVALESMVKATEVIIEVARLFEEKE</sequence>
<accession>Q92AM8</accession>
<proteinExistence type="inferred from homology"/>
<feature type="chain" id="PRO_0000185303" description="Peptidase T">
    <location>
        <begin position="1"/>
        <end position="410"/>
    </location>
</feature>
<feature type="active site" evidence="1">
    <location>
        <position position="81"/>
    </location>
</feature>
<feature type="active site" description="Proton acceptor" evidence="1">
    <location>
        <position position="176"/>
    </location>
</feature>
<feature type="binding site" evidence="1">
    <location>
        <position position="79"/>
    </location>
    <ligand>
        <name>Zn(2+)</name>
        <dbReference type="ChEBI" id="CHEBI:29105"/>
        <label>1</label>
    </ligand>
</feature>
<feature type="binding site" evidence="1">
    <location>
        <position position="142"/>
    </location>
    <ligand>
        <name>Zn(2+)</name>
        <dbReference type="ChEBI" id="CHEBI:29105"/>
        <label>1</label>
    </ligand>
</feature>
<feature type="binding site" evidence="1">
    <location>
        <position position="142"/>
    </location>
    <ligand>
        <name>Zn(2+)</name>
        <dbReference type="ChEBI" id="CHEBI:29105"/>
        <label>2</label>
    </ligand>
</feature>
<feature type="binding site" evidence="1">
    <location>
        <position position="177"/>
    </location>
    <ligand>
        <name>Zn(2+)</name>
        <dbReference type="ChEBI" id="CHEBI:29105"/>
        <label>2</label>
    </ligand>
</feature>
<feature type="binding site" evidence="1">
    <location>
        <position position="199"/>
    </location>
    <ligand>
        <name>Zn(2+)</name>
        <dbReference type="ChEBI" id="CHEBI:29105"/>
        <label>1</label>
    </ligand>
</feature>
<feature type="binding site" evidence="1">
    <location>
        <position position="381"/>
    </location>
    <ligand>
        <name>Zn(2+)</name>
        <dbReference type="ChEBI" id="CHEBI:29105"/>
        <label>2</label>
    </ligand>
</feature>